<keyword id="KW-1003">Cell membrane</keyword>
<keyword id="KW-0472">Membrane</keyword>
<keyword id="KW-1185">Reference proteome</keyword>
<keyword id="KW-0812">Transmembrane</keyword>
<keyword id="KW-1133">Transmembrane helix</keyword>
<dbReference type="EMBL" id="AL591976">
    <property type="protein sequence ID" value="CAC98857.1"/>
    <property type="molecule type" value="Genomic_DNA"/>
</dbReference>
<dbReference type="PIR" id="AC1172">
    <property type="entry name" value="AC1172"/>
</dbReference>
<dbReference type="RefSeq" id="NP_464306.1">
    <property type="nucleotide sequence ID" value="NC_003210.1"/>
</dbReference>
<dbReference type="RefSeq" id="WP_003721896.1">
    <property type="nucleotide sequence ID" value="NZ_CP149495.1"/>
</dbReference>
<dbReference type="STRING" id="169963.gene:17593430"/>
<dbReference type="PaxDb" id="169963-lmo0779"/>
<dbReference type="EnsemblBacteria" id="CAC98857">
    <property type="protein sequence ID" value="CAC98857"/>
    <property type="gene ID" value="CAC98857"/>
</dbReference>
<dbReference type="GeneID" id="985463"/>
<dbReference type="KEGG" id="lmo:lmo0779"/>
<dbReference type="PATRIC" id="fig|169963.11.peg.802"/>
<dbReference type="eggNOG" id="COG4811">
    <property type="taxonomic scope" value="Bacteria"/>
</dbReference>
<dbReference type="HOGENOM" id="CLU_133645_0_0_9"/>
<dbReference type="OrthoDB" id="2360740at2"/>
<dbReference type="PhylomeDB" id="Q8Y8W3"/>
<dbReference type="BioCyc" id="LMON169963:LMO0779-MONOMER"/>
<dbReference type="Proteomes" id="UP000000817">
    <property type="component" value="Chromosome"/>
</dbReference>
<dbReference type="GO" id="GO:0005886">
    <property type="term" value="C:plasma membrane"/>
    <property type="evidence" value="ECO:0007669"/>
    <property type="project" value="UniProtKB-SubCell"/>
</dbReference>
<dbReference type="HAMAP" id="MF_01071">
    <property type="entry name" value="UPF0266"/>
    <property type="match status" value="1"/>
</dbReference>
<dbReference type="InterPro" id="IPR009328">
    <property type="entry name" value="DUF986"/>
</dbReference>
<dbReference type="NCBIfam" id="NF002791">
    <property type="entry name" value="PRK02913.1"/>
    <property type="match status" value="1"/>
</dbReference>
<dbReference type="Pfam" id="PF06173">
    <property type="entry name" value="DUF986"/>
    <property type="match status" value="1"/>
</dbReference>
<dbReference type="PIRSF" id="PIRSF020687">
    <property type="entry name" value="UCP020687"/>
    <property type="match status" value="1"/>
</dbReference>
<feature type="chain" id="PRO_0000218117" description="UPF0266 membrane protein lmo0779">
    <location>
        <begin position="1"/>
        <end position="155"/>
    </location>
</feature>
<feature type="transmembrane region" description="Helical" evidence="1">
    <location>
        <begin position="8"/>
        <end position="28"/>
    </location>
</feature>
<feature type="transmembrane region" description="Helical" evidence="1">
    <location>
        <begin position="46"/>
        <end position="66"/>
    </location>
</feature>
<feature type="transmembrane region" description="Helical" evidence="1">
    <location>
        <begin position="70"/>
        <end position="90"/>
    </location>
</feature>
<evidence type="ECO:0000255" key="1">
    <source>
        <dbReference type="HAMAP-Rule" id="MF_01071"/>
    </source>
</evidence>
<accession>Q8Y8W3</accession>
<sequence>MVWDATNIFLFAANILTVLYILYNDAVIPLWKGKTVLSVKLRSRGRWDGYIFVGIIVLLFVSNTFFREGPFSTSVLLGIMGVLFIYICFFRSSKAVFKESGLFYALLFFPYAKIERMNLSEDGVLVIETNRQRLMLFARSEKDLEKMLAVFTTYS</sequence>
<gene>
    <name type="ordered locus">lmo0779</name>
</gene>
<proteinExistence type="inferred from homology"/>
<comment type="subcellular location">
    <subcellularLocation>
        <location evidence="1">Cell membrane</location>
        <topology evidence="1">Multi-pass membrane protein</topology>
    </subcellularLocation>
</comment>
<comment type="similarity">
    <text evidence="1">Belongs to the UPF0266 family.</text>
</comment>
<protein>
    <recommendedName>
        <fullName evidence="1">UPF0266 membrane protein lmo0779</fullName>
    </recommendedName>
</protein>
<reference key="1">
    <citation type="journal article" date="2001" name="Science">
        <title>Comparative genomics of Listeria species.</title>
        <authorList>
            <person name="Glaser P."/>
            <person name="Frangeul L."/>
            <person name="Buchrieser C."/>
            <person name="Rusniok C."/>
            <person name="Amend A."/>
            <person name="Baquero F."/>
            <person name="Berche P."/>
            <person name="Bloecker H."/>
            <person name="Brandt P."/>
            <person name="Chakraborty T."/>
            <person name="Charbit A."/>
            <person name="Chetouani F."/>
            <person name="Couve E."/>
            <person name="de Daruvar A."/>
            <person name="Dehoux P."/>
            <person name="Domann E."/>
            <person name="Dominguez-Bernal G."/>
            <person name="Duchaud E."/>
            <person name="Durant L."/>
            <person name="Dussurget O."/>
            <person name="Entian K.-D."/>
            <person name="Fsihi H."/>
            <person name="Garcia-del Portillo F."/>
            <person name="Garrido P."/>
            <person name="Gautier L."/>
            <person name="Goebel W."/>
            <person name="Gomez-Lopez N."/>
            <person name="Hain T."/>
            <person name="Hauf J."/>
            <person name="Jackson D."/>
            <person name="Jones L.-M."/>
            <person name="Kaerst U."/>
            <person name="Kreft J."/>
            <person name="Kuhn M."/>
            <person name="Kunst F."/>
            <person name="Kurapkat G."/>
            <person name="Madueno E."/>
            <person name="Maitournam A."/>
            <person name="Mata Vicente J."/>
            <person name="Ng E."/>
            <person name="Nedjari H."/>
            <person name="Nordsiek G."/>
            <person name="Novella S."/>
            <person name="de Pablos B."/>
            <person name="Perez-Diaz J.-C."/>
            <person name="Purcell R."/>
            <person name="Remmel B."/>
            <person name="Rose M."/>
            <person name="Schlueter T."/>
            <person name="Simoes N."/>
            <person name="Tierrez A."/>
            <person name="Vazquez-Boland J.-A."/>
            <person name="Voss H."/>
            <person name="Wehland J."/>
            <person name="Cossart P."/>
        </authorList>
    </citation>
    <scope>NUCLEOTIDE SEQUENCE [LARGE SCALE GENOMIC DNA]</scope>
    <source>
        <strain>ATCC BAA-679 / EGD-e</strain>
    </source>
</reference>
<organism>
    <name type="scientific">Listeria monocytogenes serovar 1/2a (strain ATCC BAA-679 / EGD-e)</name>
    <dbReference type="NCBI Taxonomy" id="169963"/>
    <lineage>
        <taxon>Bacteria</taxon>
        <taxon>Bacillati</taxon>
        <taxon>Bacillota</taxon>
        <taxon>Bacilli</taxon>
        <taxon>Bacillales</taxon>
        <taxon>Listeriaceae</taxon>
        <taxon>Listeria</taxon>
    </lineage>
</organism>
<name>Y779_LISMO</name>